<accession>Q32L17</accession>
<name>SPZ1_BOVIN</name>
<comment type="function">
    <text evidence="1">Transcription factor that binds to the DNA sequence 5'-CANNTG-3'(E box) and the G-box motif. May play an important role in the regulation of cell proliferation and differentiation during spermatogenesis (By similarity).</text>
</comment>
<comment type="subcellular location">
    <subcellularLocation>
        <location evidence="1">Cytoplasm</location>
    </subcellularLocation>
    <subcellularLocation>
        <location evidence="1">Nucleus</location>
    </subcellularLocation>
</comment>
<comment type="PTM">
    <text evidence="1">Phosphorylated by MAPK1/ERK2 and MAPK3/ERK1.</text>
</comment>
<comment type="miscellaneous">
    <text evidence="1">The helix-loop-helix and basic motifs form a SPZ1 specific bHLH different from the classical one.</text>
</comment>
<proteinExistence type="evidence at transcript level"/>
<gene>
    <name type="primary">SPZ1</name>
</gene>
<protein>
    <recommendedName>
        <fullName>Spermatogenic leucine zipper protein 1</fullName>
    </recommendedName>
</protein>
<reference key="1">
    <citation type="submission" date="2005-11" db="EMBL/GenBank/DDBJ databases">
        <authorList>
            <consortium name="NIH - Mammalian Gene Collection (MGC) project"/>
        </authorList>
    </citation>
    <scope>NUCLEOTIDE SEQUENCE [LARGE SCALE MRNA]</scope>
    <source>
        <strain>Crossbred X Angus</strain>
        <tissue>Liver</tissue>
    </source>
</reference>
<keyword id="KW-0175">Coiled coil</keyword>
<keyword id="KW-0963">Cytoplasm</keyword>
<keyword id="KW-0238">DNA-binding</keyword>
<keyword id="KW-0539">Nucleus</keyword>
<keyword id="KW-0597">Phosphoprotein</keyword>
<keyword id="KW-1185">Reference proteome</keyword>
<keyword id="KW-0804">Transcription</keyword>
<keyword id="KW-0805">Transcription regulation</keyword>
<dbReference type="EMBL" id="BC109808">
    <property type="protein sequence ID" value="AAI09809.1"/>
    <property type="molecule type" value="mRNA"/>
</dbReference>
<dbReference type="RefSeq" id="NP_001035630.1">
    <property type="nucleotide sequence ID" value="NM_001040540.2"/>
</dbReference>
<dbReference type="RefSeq" id="XP_024837060.1">
    <property type="nucleotide sequence ID" value="XM_024981292.2"/>
</dbReference>
<dbReference type="RefSeq" id="XP_059734709.1">
    <property type="nucleotide sequence ID" value="XM_059878726.1"/>
</dbReference>
<dbReference type="SMR" id="Q32L17"/>
<dbReference type="STRING" id="9913.ENSBTAP00000034157"/>
<dbReference type="PaxDb" id="9913-ENSBTAP00000034157"/>
<dbReference type="Ensembl" id="ENSBTAT00000034259.3">
    <property type="protein sequence ID" value="ENSBTAP00000034157.2"/>
    <property type="gene ID" value="ENSBTAG00000024593.3"/>
</dbReference>
<dbReference type="GeneID" id="519496"/>
<dbReference type="KEGG" id="bta:519496"/>
<dbReference type="CTD" id="84654"/>
<dbReference type="VEuPathDB" id="HostDB:ENSBTAG00000024593"/>
<dbReference type="VGNC" id="VGNC:35263">
    <property type="gene designation" value="SPZ1"/>
</dbReference>
<dbReference type="eggNOG" id="ENOG502QS87">
    <property type="taxonomic scope" value="Eukaryota"/>
</dbReference>
<dbReference type="GeneTree" id="ENSGT00950000182767"/>
<dbReference type="HOGENOM" id="CLU_062447_0_0_1"/>
<dbReference type="InParanoid" id="Q32L17"/>
<dbReference type="OMA" id="ECQILEQ"/>
<dbReference type="OrthoDB" id="9830670at2759"/>
<dbReference type="TreeFam" id="TF337798"/>
<dbReference type="Proteomes" id="UP000009136">
    <property type="component" value="Chromosome 20"/>
</dbReference>
<dbReference type="Bgee" id="ENSBTAG00000024593">
    <property type="expression patterns" value="Expressed in semen and 11 other cell types or tissues"/>
</dbReference>
<dbReference type="GO" id="GO:0005737">
    <property type="term" value="C:cytoplasm"/>
    <property type="evidence" value="ECO:0007669"/>
    <property type="project" value="UniProtKB-SubCell"/>
</dbReference>
<dbReference type="GO" id="GO:0005634">
    <property type="term" value="C:nucleus"/>
    <property type="evidence" value="ECO:0000318"/>
    <property type="project" value="GO_Central"/>
</dbReference>
<dbReference type="GO" id="GO:0003677">
    <property type="term" value="F:DNA binding"/>
    <property type="evidence" value="ECO:0007669"/>
    <property type="project" value="UniProtKB-KW"/>
</dbReference>
<dbReference type="GO" id="GO:0003700">
    <property type="term" value="F:DNA-binding transcription factor activity"/>
    <property type="evidence" value="ECO:0007669"/>
    <property type="project" value="InterPro"/>
</dbReference>
<dbReference type="InterPro" id="IPR042961">
    <property type="entry name" value="Spz1"/>
</dbReference>
<dbReference type="PANTHER" id="PTHR47889">
    <property type="entry name" value="SPERMATOGENIC LEUCINE ZIPPER PROTEIN 1"/>
    <property type="match status" value="1"/>
</dbReference>
<dbReference type="PANTHER" id="PTHR47889:SF1">
    <property type="entry name" value="SPERMATOGENIC LEUCINE ZIPPER PROTEIN 1"/>
    <property type="match status" value="1"/>
</dbReference>
<feature type="chain" id="PRO_0000280506" description="Spermatogenic leucine zipper protein 1">
    <location>
        <begin position="1"/>
        <end position="371"/>
    </location>
</feature>
<feature type="region of interest" description="Helix-loop-helix motif" evidence="3">
    <location>
        <begin position="110"/>
        <end position="120"/>
    </location>
</feature>
<feature type="region of interest" description="Basic motif" evidence="3">
    <location>
        <begin position="121"/>
        <end position="188"/>
    </location>
</feature>
<feature type="region of interest" description="Disordered" evidence="4">
    <location>
        <begin position="223"/>
        <end position="246"/>
    </location>
</feature>
<feature type="region of interest" description="Leucine-zipper">
    <location>
        <begin position="245"/>
        <end position="266"/>
    </location>
</feature>
<feature type="coiled-coil region" evidence="3">
    <location>
        <begin position="96"/>
        <end position="148"/>
    </location>
</feature>
<feature type="coiled-coil region" evidence="3">
    <location>
        <begin position="177"/>
        <end position="289"/>
    </location>
</feature>
<feature type="compositionally biased region" description="Polar residues" evidence="4">
    <location>
        <begin position="223"/>
        <end position="240"/>
    </location>
</feature>
<feature type="modified residue" description="Phosphoserine" evidence="2">
    <location>
        <position position="98"/>
    </location>
</feature>
<feature type="modified residue" description="Phosphoserine" evidence="2">
    <location>
        <position position="202"/>
    </location>
</feature>
<evidence type="ECO:0000250" key="1"/>
<evidence type="ECO:0000250" key="2">
    <source>
        <dbReference type="UniProtKB" id="Q6AXY9"/>
    </source>
</evidence>
<evidence type="ECO:0000255" key="3"/>
<evidence type="ECO:0000256" key="4">
    <source>
        <dbReference type="SAM" id="MobiDB-lite"/>
    </source>
</evidence>
<sequence length="371" mass="42777">MEVPTLSKTRKPPDLNEESLDLGIMIALFEIGSIPPVSCSSLPSLKSSDHEATEQRIAKKFESLLKEIKDIVKHVTSYEQKVTETKEPFKETNMFEVSELREKIIELDEINKELVKKLLASLDLGKKENAKKQEMRLDNQNSEDTVQDCSGDLVNCSKGQKALPETQLSKEKAKHGFPHIQEENIRLRNNMERLLQEAEHWSVEHTELSKLIKSYQKSQNDIKTLKNNGTHSPTQTNNESAKQELEEQVKRLKEDTYSLHLIATLLENECQILEQRVELLDELHHQKEEPLQGEPMQINHEQSDKEQKLPEAEKVKIHEKNMPEVEGTFHKRDQFFTSLDICHNKKAHNNQFNTRIAKRALVVKRPASSLS</sequence>
<organism>
    <name type="scientific">Bos taurus</name>
    <name type="common">Bovine</name>
    <dbReference type="NCBI Taxonomy" id="9913"/>
    <lineage>
        <taxon>Eukaryota</taxon>
        <taxon>Metazoa</taxon>
        <taxon>Chordata</taxon>
        <taxon>Craniata</taxon>
        <taxon>Vertebrata</taxon>
        <taxon>Euteleostomi</taxon>
        <taxon>Mammalia</taxon>
        <taxon>Eutheria</taxon>
        <taxon>Laurasiatheria</taxon>
        <taxon>Artiodactyla</taxon>
        <taxon>Ruminantia</taxon>
        <taxon>Pecora</taxon>
        <taxon>Bovidae</taxon>
        <taxon>Bovinae</taxon>
        <taxon>Bos</taxon>
    </lineage>
</organism>